<reference key="1">
    <citation type="journal article" date="2014" name="BMC Genomics">
        <title>Comparative genome sequencing reveals chemotype-specific gene clusters in the toxigenic black mold Stachybotrys.</title>
        <authorList>
            <person name="Semeiks J."/>
            <person name="Borek D."/>
            <person name="Otwinowski Z."/>
            <person name="Grishin N.V."/>
        </authorList>
    </citation>
    <scope>NUCLEOTIDE SEQUENCE [LARGE SCALE GENOMIC DNA]</scope>
    <scope>IDENTIFICATION</scope>
    <scope>FUNCTION</scope>
    <source>
        <strain>IBT 40285</strain>
    </source>
</reference>
<proteinExistence type="inferred from homology"/>
<name>ATR4_STAC4</name>
<accession>A0A084R1M7</accession>
<organism>
    <name type="scientific">Stachybotrys chlorohalonatus (strain IBT 40285)</name>
    <dbReference type="NCBI Taxonomy" id="1283841"/>
    <lineage>
        <taxon>Eukaryota</taxon>
        <taxon>Fungi</taxon>
        <taxon>Dikarya</taxon>
        <taxon>Ascomycota</taxon>
        <taxon>Pezizomycotina</taxon>
        <taxon>Sordariomycetes</taxon>
        <taxon>Hypocreomycetidae</taxon>
        <taxon>Hypocreales</taxon>
        <taxon>Stachybotryaceae</taxon>
        <taxon>Stachybotrys</taxon>
    </lineage>
</organism>
<sequence length="524" mass="60146">MRLDLLGPVATRIITYLDSLTWVGMALPLFSLCWAISYARGKAYPTVPGAPVYGYNSRFEPSFMLKSRTYTGFYDILSNGYKMLKDVPFVIPRHDTNINILPIKYLDEIRLMPKHILNSHLVLISQMTPKWTWLQPAADSDLVTRVLLTKLNPDLQKYVDITRLELDSAFKSDFPRHDEEWTEVDFQPLIRRVLTRISAKIFLGEPACLNEDWLRIAIGYTAGALEVTKDLHKFPSWTHFLVAPLLPSRRRLRRELDIAMKIVEKQIQLHEQAEKDGLKNYDTLLDWMLDNCSDKESSVEAMTIFQCFIAMASIHTTEFSLANVLFDLCAHPEWFPVLREELDEVIRVHGNIGHRLPAKQWLQKLEKMDSLLAETLRLCPTMLTSIQRLALEKVQLKDGTVIPKGSRLAWASLHHVTDPEVDGTLAAWDPMRNYRKRHSGSGENLTKFVAGQINESTLGFGYGNQACPGRYFAVNEIKMMLARLLLEFEFKFPEGKSRPKVFFIGEIACLDHDATLMMRNVRTC</sequence>
<feature type="chain" id="PRO_0000442386" description="Cytochrome P450 monooxygenase ATR4">
    <location>
        <begin position="1"/>
        <end position="524"/>
    </location>
</feature>
<feature type="transmembrane region" description="Helical" evidence="3">
    <location>
        <begin position="13"/>
        <end position="36"/>
    </location>
</feature>
<feature type="glycosylation site" description="N-linked (GlcNAc...) asparagine" evidence="4">
    <location>
        <position position="291"/>
    </location>
</feature>
<feature type="glycosylation site" description="N-linked (GlcNAc...) asparagine" evidence="4">
    <location>
        <position position="444"/>
    </location>
</feature>
<feature type="glycosylation site" description="N-linked (GlcNAc...) asparagine" evidence="4">
    <location>
        <position position="454"/>
    </location>
</feature>
<keyword id="KW-0325">Glycoprotein</keyword>
<keyword id="KW-0349">Heme</keyword>
<keyword id="KW-0408">Iron</keyword>
<keyword id="KW-0472">Membrane</keyword>
<keyword id="KW-0479">Metal-binding</keyword>
<keyword id="KW-0503">Monooxygenase</keyword>
<keyword id="KW-0560">Oxidoreductase</keyword>
<keyword id="KW-1185">Reference proteome</keyword>
<keyword id="KW-0812">Transmembrane</keyword>
<keyword id="KW-1133">Transmembrane helix</keyword>
<comment type="function">
    <text evidence="2 7">Cytochrome P450 monooxygenase; part of the core atranone cluster (CAC) which products are predicted to catalyze most or all steps of mycotoxin atranone synthesis, starting from geranylgeranyl pyrophosphate (GGPP) (PubMed:25015739). The initial cyclization of GGPP to dolabellane is probably performed by the terpene cyclase ATR13 (PubMed:25015739). The Baeyer-Villiger oxidation near the end of the atranone synthesis, which converts atranones D and E to atranones F and G is predicted to be catalyzed by the monooxygenase ATR8 (PubMed:25015739). Of the CAC's other predicted gene products, the reducing PKS ATR6 might synthesize a polyketide chain (PubMed:25015739). This polyketide is probably transferred onto the atranone backbone by the polyketide transferase ATR5 (By similarity). Other predicted CAC products include 4 oxygenases (ATR2, ATR3, ATR4, and ATR14), 3 short-chain reductases (ATR7, ATR9, and ATR10), and a methyltransferase (ATR12) (PubMed:25015739). These may all be involved in the various steps of atranone biosynthesis, although their specific roles must await experimental determination (PubMed:25015739).</text>
</comment>
<comment type="cofactor">
    <cofactor evidence="1">
        <name>heme</name>
        <dbReference type="ChEBI" id="CHEBI:30413"/>
    </cofactor>
</comment>
<comment type="pathway">
    <text evidence="7">Mycotoxin biosynthesis.</text>
</comment>
<comment type="subcellular location">
    <subcellularLocation>
        <location evidence="3">Membrane</location>
        <topology evidence="3">Single-pass membrane protein</topology>
    </subcellularLocation>
</comment>
<comment type="similarity">
    <text evidence="6">Belongs to the cytochrome P450 family.</text>
</comment>
<protein>
    <recommendedName>
        <fullName evidence="5">Cytochrome P450 monooxygenase ATR4</fullName>
        <ecNumber evidence="7">1.-.-.-</ecNumber>
    </recommendedName>
    <alternativeName>
        <fullName evidence="5">Core atranone cluster (CAC) protein 4</fullName>
    </alternativeName>
</protein>
<evidence type="ECO:0000250" key="1">
    <source>
        <dbReference type="UniProtKB" id="P04798"/>
    </source>
</evidence>
<evidence type="ECO:0000250" key="2">
    <source>
        <dbReference type="UniProtKB" id="Q4WAY4"/>
    </source>
</evidence>
<evidence type="ECO:0000255" key="3"/>
<evidence type="ECO:0000255" key="4">
    <source>
        <dbReference type="PROSITE-ProRule" id="PRU00498"/>
    </source>
</evidence>
<evidence type="ECO:0000303" key="5">
    <source>
    </source>
</evidence>
<evidence type="ECO:0000305" key="6"/>
<evidence type="ECO:0000305" key="7">
    <source>
    </source>
</evidence>
<dbReference type="EC" id="1.-.-.-" evidence="7"/>
<dbReference type="EMBL" id="KL659308">
    <property type="protein sequence ID" value="KFA70112.1"/>
    <property type="molecule type" value="Genomic_DNA"/>
</dbReference>
<dbReference type="SMR" id="A0A084R1M7"/>
<dbReference type="STRING" id="1283841.A0A084R1M7"/>
<dbReference type="GlyCosmos" id="A0A084R1M7">
    <property type="glycosylation" value="3 sites, No reported glycans"/>
</dbReference>
<dbReference type="HOGENOM" id="CLU_022195_0_1_1"/>
<dbReference type="InParanoid" id="A0A084R1M7"/>
<dbReference type="OMA" id="ARQCVLT"/>
<dbReference type="OrthoDB" id="1844152at2759"/>
<dbReference type="Proteomes" id="UP000028524">
    <property type="component" value="Unassembled WGS sequence"/>
</dbReference>
<dbReference type="GO" id="GO:0016020">
    <property type="term" value="C:membrane"/>
    <property type="evidence" value="ECO:0007669"/>
    <property type="project" value="UniProtKB-SubCell"/>
</dbReference>
<dbReference type="GO" id="GO:0020037">
    <property type="term" value="F:heme binding"/>
    <property type="evidence" value="ECO:0007669"/>
    <property type="project" value="InterPro"/>
</dbReference>
<dbReference type="GO" id="GO:0005506">
    <property type="term" value="F:iron ion binding"/>
    <property type="evidence" value="ECO:0007669"/>
    <property type="project" value="InterPro"/>
</dbReference>
<dbReference type="GO" id="GO:0004497">
    <property type="term" value="F:monooxygenase activity"/>
    <property type="evidence" value="ECO:0007669"/>
    <property type="project" value="UniProtKB-KW"/>
</dbReference>
<dbReference type="GO" id="GO:0016705">
    <property type="term" value="F:oxidoreductase activity, acting on paired donors, with incorporation or reduction of molecular oxygen"/>
    <property type="evidence" value="ECO:0007669"/>
    <property type="project" value="InterPro"/>
</dbReference>
<dbReference type="GO" id="GO:0019748">
    <property type="term" value="P:secondary metabolic process"/>
    <property type="evidence" value="ECO:0007669"/>
    <property type="project" value="UniProtKB-ARBA"/>
</dbReference>
<dbReference type="CDD" id="cd11041">
    <property type="entry name" value="CYP503A1-like"/>
    <property type="match status" value="1"/>
</dbReference>
<dbReference type="Gene3D" id="1.10.630.10">
    <property type="entry name" value="Cytochrome P450"/>
    <property type="match status" value="1"/>
</dbReference>
<dbReference type="InterPro" id="IPR001128">
    <property type="entry name" value="Cyt_P450"/>
</dbReference>
<dbReference type="InterPro" id="IPR002403">
    <property type="entry name" value="Cyt_P450_E_grp-IV"/>
</dbReference>
<dbReference type="InterPro" id="IPR036396">
    <property type="entry name" value="Cyt_P450_sf"/>
</dbReference>
<dbReference type="PANTHER" id="PTHR46206">
    <property type="entry name" value="CYTOCHROME P450"/>
    <property type="match status" value="1"/>
</dbReference>
<dbReference type="PANTHER" id="PTHR46206:SF9">
    <property type="entry name" value="CYTOCHROME P450"/>
    <property type="match status" value="1"/>
</dbReference>
<dbReference type="Pfam" id="PF00067">
    <property type="entry name" value="p450"/>
    <property type="match status" value="1"/>
</dbReference>
<dbReference type="PRINTS" id="PR00465">
    <property type="entry name" value="EP450IV"/>
</dbReference>
<dbReference type="SUPFAM" id="SSF48264">
    <property type="entry name" value="Cytochrome P450"/>
    <property type="match status" value="1"/>
</dbReference>
<gene>
    <name evidence="5" type="primary">ATR4</name>
    <name type="ORF">S40285_03329</name>
</gene>